<reference key="1">
    <citation type="submission" date="2005-03" db="EMBL/GenBank/DDBJ databases">
        <title>Comparison of the complete genome sequences of Rhodococcus erythropolis PR4 and Rhodococcus opacus B4.</title>
        <authorList>
            <person name="Takarada H."/>
            <person name="Sekine M."/>
            <person name="Hosoyama A."/>
            <person name="Yamada R."/>
            <person name="Fujisawa T."/>
            <person name="Omata S."/>
            <person name="Shimizu A."/>
            <person name="Tsukatani N."/>
            <person name="Tanikawa S."/>
            <person name="Fujita N."/>
            <person name="Harayama S."/>
        </authorList>
    </citation>
    <scope>NUCLEOTIDE SEQUENCE [LARGE SCALE GENOMIC DNA]</scope>
    <source>
        <strain>PR4 / NBRC 100887</strain>
    </source>
</reference>
<evidence type="ECO:0000255" key="1">
    <source>
        <dbReference type="HAMAP-Rule" id="MF_00193"/>
    </source>
</evidence>
<proteinExistence type="inferred from homology"/>
<comment type="function">
    <text evidence="1">Catalyzes the ATP-dependent amidation of deamido-NAD to form NAD. Uses ammonia as a nitrogen source.</text>
</comment>
<comment type="catalytic activity">
    <reaction evidence="1">
        <text>deamido-NAD(+) + NH4(+) + ATP = AMP + diphosphate + NAD(+) + H(+)</text>
        <dbReference type="Rhea" id="RHEA:21188"/>
        <dbReference type="ChEBI" id="CHEBI:15378"/>
        <dbReference type="ChEBI" id="CHEBI:28938"/>
        <dbReference type="ChEBI" id="CHEBI:30616"/>
        <dbReference type="ChEBI" id="CHEBI:33019"/>
        <dbReference type="ChEBI" id="CHEBI:57540"/>
        <dbReference type="ChEBI" id="CHEBI:58437"/>
        <dbReference type="ChEBI" id="CHEBI:456215"/>
        <dbReference type="EC" id="6.3.1.5"/>
    </reaction>
</comment>
<comment type="pathway">
    <text evidence="1">Cofactor biosynthesis; NAD(+) biosynthesis; NAD(+) from deamido-NAD(+) (ammonia route): step 1/1.</text>
</comment>
<comment type="subunit">
    <text evidence="1">Homodimer.</text>
</comment>
<comment type="similarity">
    <text evidence="1">Belongs to the NAD synthetase family.</text>
</comment>
<protein>
    <recommendedName>
        <fullName evidence="1">NH(3)-dependent NAD(+) synthetase</fullName>
        <ecNumber evidence="1">6.3.1.5</ecNumber>
    </recommendedName>
</protein>
<gene>
    <name evidence="1" type="primary">nadE</name>
    <name type="ordered locus">RER_23440</name>
</gene>
<dbReference type="EC" id="6.3.1.5" evidence="1"/>
<dbReference type="EMBL" id="AP008957">
    <property type="protein sequence ID" value="BAH33052.1"/>
    <property type="molecule type" value="Genomic_DNA"/>
</dbReference>
<dbReference type="RefSeq" id="WP_020907229.1">
    <property type="nucleotide sequence ID" value="NC_012490.1"/>
</dbReference>
<dbReference type="SMR" id="C0ZXG7"/>
<dbReference type="KEGG" id="rer:RER_23440"/>
<dbReference type="PATRIC" id="fig|234621.6.peg.2847"/>
<dbReference type="eggNOG" id="COG0171">
    <property type="taxonomic scope" value="Bacteria"/>
</dbReference>
<dbReference type="HOGENOM" id="CLU_059327_3_0_11"/>
<dbReference type="UniPathway" id="UPA00253">
    <property type="reaction ID" value="UER00333"/>
</dbReference>
<dbReference type="Proteomes" id="UP000002204">
    <property type="component" value="Chromosome"/>
</dbReference>
<dbReference type="GO" id="GO:0005737">
    <property type="term" value="C:cytoplasm"/>
    <property type="evidence" value="ECO:0007669"/>
    <property type="project" value="InterPro"/>
</dbReference>
<dbReference type="GO" id="GO:0005524">
    <property type="term" value="F:ATP binding"/>
    <property type="evidence" value="ECO:0007669"/>
    <property type="project" value="UniProtKB-UniRule"/>
</dbReference>
<dbReference type="GO" id="GO:0004359">
    <property type="term" value="F:glutaminase activity"/>
    <property type="evidence" value="ECO:0007669"/>
    <property type="project" value="InterPro"/>
</dbReference>
<dbReference type="GO" id="GO:0046872">
    <property type="term" value="F:metal ion binding"/>
    <property type="evidence" value="ECO:0007669"/>
    <property type="project" value="UniProtKB-KW"/>
</dbReference>
<dbReference type="GO" id="GO:0003952">
    <property type="term" value="F:NAD+ synthase (glutamine-hydrolyzing) activity"/>
    <property type="evidence" value="ECO:0007669"/>
    <property type="project" value="InterPro"/>
</dbReference>
<dbReference type="GO" id="GO:0008795">
    <property type="term" value="F:NAD+ synthase activity"/>
    <property type="evidence" value="ECO:0007669"/>
    <property type="project" value="UniProtKB-UniRule"/>
</dbReference>
<dbReference type="GO" id="GO:0009435">
    <property type="term" value="P:NAD biosynthetic process"/>
    <property type="evidence" value="ECO:0007669"/>
    <property type="project" value="UniProtKB-UniRule"/>
</dbReference>
<dbReference type="CDD" id="cd00553">
    <property type="entry name" value="NAD_synthase"/>
    <property type="match status" value="1"/>
</dbReference>
<dbReference type="FunFam" id="3.40.50.620:FF:000015">
    <property type="entry name" value="NH(3)-dependent NAD(+) synthetase"/>
    <property type="match status" value="1"/>
</dbReference>
<dbReference type="Gene3D" id="3.40.50.620">
    <property type="entry name" value="HUPs"/>
    <property type="match status" value="1"/>
</dbReference>
<dbReference type="HAMAP" id="MF_00193">
    <property type="entry name" value="NadE_ammonia_dep"/>
    <property type="match status" value="1"/>
</dbReference>
<dbReference type="InterPro" id="IPR022310">
    <property type="entry name" value="NAD/GMP_synthase"/>
</dbReference>
<dbReference type="InterPro" id="IPR003694">
    <property type="entry name" value="NAD_synthase"/>
</dbReference>
<dbReference type="InterPro" id="IPR022926">
    <property type="entry name" value="NH(3)-dep_NAD(+)_synth"/>
</dbReference>
<dbReference type="InterPro" id="IPR014729">
    <property type="entry name" value="Rossmann-like_a/b/a_fold"/>
</dbReference>
<dbReference type="NCBIfam" id="TIGR00552">
    <property type="entry name" value="nadE"/>
    <property type="match status" value="1"/>
</dbReference>
<dbReference type="NCBIfam" id="NF001979">
    <property type="entry name" value="PRK00768.1"/>
    <property type="match status" value="1"/>
</dbReference>
<dbReference type="PANTHER" id="PTHR23090">
    <property type="entry name" value="NH 3 /GLUTAMINE-DEPENDENT NAD + SYNTHETASE"/>
    <property type="match status" value="1"/>
</dbReference>
<dbReference type="PANTHER" id="PTHR23090:SF7">
    <property type="entry name" value="NH(3)-DEPENDENT NAD(+) SYNTHETASE"/>
    <property type="match status" value="1"/>
</dbReference>
<dbReference type="Pfam" id="PF02540">
    <property type="entry name" value="NAD_synthase"/>
    <property type="match status" value="1"/>
</dbReference>
<dbReference type="SUPFAM" id="SSF52402">
    <property type="entry name" value="Adenine nucleotide alpha hydrolases-like"/>
    <property type="match status" value="1"/>
</dbReference>
<name>NADE_RHOE4</name>
<accession>C0ZXG7</accession>
<organism>
    <name type="scientific">Rhodococcus erythropolis (strain PR4 / NBRC 100887)</name>
    <dbReference type="NCBI Taxonomy" id="234621"/>
    <lineage>
        <taxon>Bacteria</taxon>
        <taxon>Bacillati</taxon>
        <taxon>Actinomycetota</taxon>
        <taxon>Actinomycetes</taxon>
        <taxon>Mycobacteriales</taxon>
        <taxon>Nocardiaceae</taxon>
        <taxon>Rhodococcus</taxon>
        <taxon>Rhodococcus erythropolis group</taxon>
    </lineage>
</organism>
<sequence>MATLRESIIEELGTKPTIDAAAEVRARVQFLKDYVRSTPAKGFVLGISGGQDSTLAGALAQRAVTELREEGHEAEFVAVRLPYGAQADESDAQIALGFIKPDRSITVNVKPGADATAREASEALGNGELRDFVRGNIKARERMVIQYAIAGQLGYLVIGTDHAAEAITGFFTKFGDGGVDITPLTGLSKRQGAALLQELGAPESTWRKVPTADLEDDRPALPDEVALGVTYSQIDDYLEGKDVSSEVAEKLEKMFANTRHKRTVPVTPLDDWWK</sequence>
<feature type="chain" id="PRO_1000204021" description="NH(3)-dependent NAD(+) synthetase">
    <location>
        <begin position="1"/>
        <end position="274"/>
    </location>
</feature>
<feature type="binding site" evidence="1">
    <location>
        <begin position="46"/>
        <end position="53"/>
    </location>
    <ligand>
        <name>ATP</name>
        <dbReference type="ChEBI" id="CHEBI:30616"/>
    </ligand>
</feature>
<feature type="binding site" evidence="1">
    <location>
        <position position="52"/>
    </location>
    <ligand>
        <name>Mg(2+)</name>
        <dbReference type="ChEBI" id="CHEBI:18420"/>
    </ligand>
</feature>
<feature type="binding site" evidence="1">
    <location>
        <position position="140"/>
    </location>
    <ligand>
        <name>deamido-NAD(+)</name>
        <dbReference type="ChEBI" id="CHEBI:58437"/>
    </ligand>
</feature>
<feature type="binding site" evidence="1">
    <location>
        <position position="160"/>
    </location>
    <ligand>
        <name>ATP</name>
        <dbReference type="ChEBI" id="CHEBI:30616"/>
    </ligand>
</feature>
<feature type="binding site" evidence="1">
    <location>
        <position position="165"/>
    </location>
    <ligand>
        <name>Mg(2+)</name>
        <dbReference type="ChEBI" id="CHEBI:18420"/>
    </ligand>
</feature>
<feature type="binding site" evidence="1">
    <location>
        <position position="173"/>
    </location>
    <ligand>
        <name>deamido-NAD(+)</name>
        <dbReference type="ChEBI" id="CHEBI:58437"/>
    </ligand>
</feature>
<feature type="binding site" evidence="1">
    <location>
        <position position="180"/>
    </location>
    <ligand>
        <name>deamido-NAD(+)</name>
        <dbReference type="ChEBI" id="CHEBI:58437"/>
    </ligand>
</feature>
<feature type="binding site" evidence="1">
    <location>
        <position position="189"/>
    </location>
    <ligand>
        <name>ATP</name>
        <dbReference type="ChEBI" id="CHEBI:30616"/>
    </ligand>
</feature>
<feature type="binding site" evidence="1">
    <location>
        <position position="211"/>
    </location>
    <ligand>
        <name>ATP</name>
        <dbReference type="ChEBI" id="CHEBI:30616"/>
    </ligand>
</feature>
<feature type="binding site" evidence="1">
    <location>
        <begin position="260"/>
        <end position="261"/>
    </location>
    <ligand>
        <name>deamido-NAD(+)</name>
        <dbReference type="ChEBI" id="CHEBI:58437"/>
    </ligand>
</feature>
<keyword id="KW-0067">ATP-binding</keyword>
<keyword id="KW-0436">Ligase</keyword>
<keyword id="KW-0460">Magnesium</keyword>
<keyword id="KW-0479">Metal-binding</keyword>
<keyword id="KW-0520">NAD</keyword>
<keyword id="KW-0547">Nucleotide-binding</keyword>